<sequence length="259" mass="28820">MILLIDVGNTNIVLGIHDNEKYIASWRISTDSKKTSDEYSIQVMQLFNQAKLNPEDVEGIIISSVVPNIMHSLENMVRKCFCKEPIVVGPGIKTGINIKYDNPKEVGADRIVNAVAAFEKHKKPMIIIDFGTATTFCAITEKGDYLGGNICPGIQISADALFERAAKLPRIELEKPKSVICKNTVTSMQAGIIYGYIGKVEYIVKRMKKEMMDLGEKEPFVLATGGLAKLVYSETDVIDEVDRKLTLEGLKILYEKNKE</sequence>
<proteinExistence type="inferred from homology"/>
<evidence type="ECO:0000255" key="1">
    <source>
        <dbReference type="HAMAP-Rule" id="MF_01274"/>
    </source>
</evidence>
<dbReference type="EC" id="2.7.1.33" evidence="1"/>
<dbReference type="EMBL" id="BA000016">
    <property type="protein sequence ID" value="BAB82174.1"/>
    <property type="molecule type" value="Genomic_DNA"/>
</dbReference>
<dbReference type="RefSeq" id="WP_011010919.1">
    <property type="nucleotide sequence ID" value="NC_003366.1"/>
</dbReference>
<dbReference type="SMR" id="Q8XHL5"/>
<dbReference type="STRING" id="195102.gene:10491795"/>
<dbReference type="KEGG" id="cpe:CPE2468"/>
<dbReference type="HOGENOM" id="CLU_066627_1_0_9"/>
<dbReference type="UniPathway" id="UPA00241">
    <property type="reaction ID" value="UER00352"/>
</dbReference>
<dbReference type="Proteomes" id="UP000000818">
    <property type="component" value="Chromosome"/>
</dbReference>
<dbReference type="GO" id="GO:0005737">
    <property type="term" value="C:cytoplasm"/>
    <property type="evidence" value="ECO:0007669"/>
    <property type="project" value="UniProtKB-SubCell"/>
</dbReference>
<dbReference type="GO" id="GO:0005524">
    <property type="term" value="F:ATP binding"/>
    <property type="evidence" value="ECO:0007669"/>
    <property type="project" value="UniProtKB-UniRule"/>
</dbReference>
<dbReference type="GO" id="GO:0046872">
    <property type="term" value="F:metal ion binding"/>
    <property type="evidence" value="ECO:0007669"/>
    <property type="project" value="UniProtKB-KW"/>
</dbReference>
<dbReference type="GO" id="GO:0004594">
    <property type="term" value="F:pantothenate kinase activity"/>
    <property type="evidence" value="ECO:0007669"/>
    <property type="project" value="UniProtKB-UniRule"/>
</dbReference>
<dbReference type="GO" id="GO:0015937">
    <property type="term" value="P:coenzyme A biosynthetic process"/>
    <property type="evidence" value="ECO:0007669"/>
    <property type="project" value="UniProtKB-UniRule"/>
</dbReference>
<dbReference type="CDD" id="cd24015">
    <property type="entry name" value="ASKHA_NBD_PanK-III"/>
    <property type="match status" value="1"/>
</dbReference>
<dbReference type="Gene3D" id="3.30.420.40">
    <property type="match status" value="2"/>
</dbReference>
<dbReference type="HAMAP" id="MF_01274">
    <property type="entry name" value="Pantothen_kinase_3"/>
    <property type="match status" value="1"/>
</dbReference>
<dbReference type="InterPro" id="IPR043129">
    <property type="entry name" value="ATPase_NBD"/>
</dbReference>
<dbReference type="InterPro" id="IPR004619">
    <property type="entry name" value="Type_III_PanK"/>
</dbReference>
<dbReference type="NCBIfam" id="TIGR00671">
    <property type="entry name" value="baf"/>
    <property type="match status" value="1"/>
</dbReference>
<dbReference type="NCBIfam" id="NF009847">
    <property type="entry name" value="PRK13318.1-5"/>
    <property type="match status" value="1"/>
</dbReference>
<dbReference type="NCBIfam" id="NF009848">
    <property type="entry name" value="PRK13318.1-6"/>
    <property type="match status" value="1"/>
</dbReference>
<dbReference type="NCBIfam" id="NF009855">
    <property type="entry name" value="PRK13321.1"/>
    <property type="match status" value="1"/>
</dbReference>
<dbReference type="PANTHER" id="PTHR34265">
    <property type="entry name" value="TYPE III PANTOTHENATE KINASE"/>
    <property type="match status" value="1"/>
</dbReference>
<dbReference type="PANTHER" id="PTHR34265:SF1">
    <property type="entry name" value="TYPE III PANTOTHENATE KINASE"/>
    <property type="match status" value="1"/>
</dbReference>
<dbReference type="Pfam" id="PF03309">
    <property type="entry name" value="Pan_kinase"/>
    <property type="match status" value="1"/>
</dbReference>
<dbReference type="SUPFAM" id="SSF53067">
    <property type="entry name" value="Actin-like ATPase domain"/>
    <property type="match status" value="2"/>
</dbReference>
<keyword id="KW-0067">ATP-binding</keyword>
<keyword id="KW-0173">Coenzyme A biosynthesis</keyword>
<keyword id="KW-0963">Cytoplasm</keyword>
<keyword id="KW-0418">Kinase</keyword>
<keyword id="KW-0479">Metal-binding</keyword>
<keyword id="KW-0547">Nucleotide-binding</keyword>
<keyword id="KW-0630">Potassium</keyword>
<keyword id="KW-1185">Reference proteome</keyword>
<keyword id="KW-0808">Transferase</keyword>
<organism>
    <name type="scientific">Clostridium perfringens (strain 13 / Type A)</name>
    <dbReference type="NCBI Taxonomy" id="195102"/>
    <lineage>
        <taxon>Bacteria</taxon>
        <taxon>Bacillati</taxon>
        <taxon>Bacillota</taxon>
        <taxon>Clostridia</taxon>
        <taxon>Eubacteriales</taxon>
        <taxon>Clostridiaceae</taxon>
        <taxon>Clostridium</taxon>
    </lineage>
</organism>
<protein>
    <recommendedName>
        <fullName evidence="1">Type III pantothenate kinase</fullName>
        <ecNumber evidence="1">2.7.1.33</ecNumber>
    </recommendedName>
    <alternativeName>
        <fullName evidence="1">PanK-III</fullName>
    </alternativeName>
    <alternativeName>
        <fullName evidence="1">Pantothenic acid kinase</fullName>
    </alternativeName>
</protein>
<reference key="1">
    <citation type="journal article" date="2002" name="Proc. Natl. Acad. Sci. U.S.A.">
        <title>Complete genome sequence of Clostridium perfringens, an anaerobic flesh-eater.</title>
        <authorList>
            <person name="Shimizu T."/>
            <person name="Ohtani K."/>
            <person name="Hirakawa H."/>
            <person name="Ohshima K."/>
            <person name="Yamashita A."/>
            <person name="Shiba T."/>
            <person name="Ogasawara N."/>
            <person name="Hattori M."/>
            <person name="Kuhara S."/>
            <person name="Hayashi H."/>
        </authorList>
    </citation>
    <scope>NUCLEOTIDE SEQUENCE [LARGE SCALE GENOMIC DNA]</scope>
    <source>
        <strain>13 / Type A</strain>
    </source>
</reference>
<gene>
    <name evidence="1" type="primary">coaX</name>
    <name type="ordered locus">CPE2468</name>
</gene>
<feature type="chain" id="PRO_0000267512" description="Type III pantothenate kinase">
    <location>
        <begin position="1"/>
        <end position="259"/>
    </location>
</feature>
<feature type="active site" description="Proton acceptor" evidence="1">
    <location>
        <position position="109"/>
    </location>
</feature>
<feature type="binding site" evidence="1">
    <location>
        <begin position="6"/>
        <end position="13"/>
    </location>
    <ligand>
        <name>ATP</name>
        <dbReference type="ChEBI" id="CHEBI:30616"/>
    </ligand>
</feature>
<feature type="binding site" evidence="1">
    <location>
        <position position="100"/>
    </location>
    <ligand>
        <name>substrate</name>
    </ligand>
</feature>
<feature type="binding site" evidence="1">
    <location>
        <begin position="107"/>
        <end position="110"/>
    </location>
    <ligand>
        <name>substrate</name>
    </ligand>
</feature>
<feature type="binding site" evidence="1">
    <location>
        <position position="129"/>
    </location>
    <ligand>
        <name>K(+)</name>
        <dbReference type="ChEBI" id="CHEBI:29103"/>
    </ligand>
</feature>
<feature type="binding site" evidence="1">
    <location>
        <position position="132"/>
    </location>
    <ligand>
        <name>ATP</name>
        <dbReference type="ChEBI" id="CHEBI:30616"/>
    </ligand>
</feature>
<feature type="binding site" evidence="1">
    <location>
        <position position="184"/>
    </location>
    <ligand>
        <name>substrate</name>
    </ligand>
</feature>
<comment type="function">
    <text evidence="1">Catalyzes the phosphorylation of pantothenate (Pan), the first step in CoA biosynthesis.</text>
</comment>
<comment type="catalytic activity">
    <reaction evidence="1">
        <text>(R)-pantothenate + ATP = (R)-4'-phosphopantothenate + ADP + H(+)</text>
        <dbReference type="Rhea" id="RHEA:16373"/>
        <dbReference type="ChEBI" id="CHEBI:10986"/>
        <dbReference type="ChEBI" id="CHEBI:15378"/>
        <dbReference type="ChEBI" id="CHEBI:29032"/>
        <dbReference type="ChEBI" id="CHEBI:30616"/>
        <dbReference type="ChEBI" id="CHEBI:456216"/>
        <dbReference type="EC" id="2.7.1.33"/>
    </reaction>
</comment>
<comment type="cofactor">
    <cofactor evidence="1">
        <name>NH4(+)</name>
        <dbReference type="ChEBI" id="CHEBI:28938"/>
    </cofactor>
    <cofactor evidence="1">
        <name>K(+)</name>
        <dbReference type="ChEBI" id="CHEBI:29103"/>
    </cofactor>
    <text evidence="1">A monovalent cation. Ammonium or potassium.</text>
</comment>
<comment type="pathway">
    <text evidence="1">Cofactor biosynthesis; coenzyme A biosynthesis; CoA from (R)-pantothenate: step 1/5.</text>
</comment>
<comment type="subunit">
    <text evidence="1">Homodimer.</text>
</comment>
<comment type="subcellular location">
    <subcellularLocation>
        <location evidence="1">Cytoplasm</location>
    </subcellularLocation>
</comment>
<comment type="similarity">
    <text evidence="1">Belongs to the type III pantothenate kinase family.</text>
</comment>
<name>COAX_CLOPE</name>
<accession>Q8XHL5</accession>